<evidence type="ECO:0000250" key="1"/>
<evidence type="ECO:0000255" key="2"/>
<evidence type="ECO:0000255" key="3">
    <source>
        <dbReference type="PROSITE-ProRule" id="PRU10039"/>
    </source>
</evidence>
<evidence type="ECO:0000305" key="4"/>
<comment type="function">
    <text evidence="1">Probable carboxylesterase.</text>
</comment>
<comment type="subcellular location">
    <subcellularLocation>
        <location evidence="4">Secreted</location>
    </subcellularLocation>
</comment>
<comment type="similarity">
    <text evidence="4">Belongs to the type-B carboxylesterase/lipase family.</text>
</comment>
<sequence>MNWILCLSLTLLLVVQTAWGALHTKEPLADTKYGTLRGKQIHVGKTPINVFLGVPFSKPPVGAHRFAAPEPPEPWEGIRDATTYAPVCLQESWGQVTSMYFNTHKRYKWLHFSEDCLYLNVHAPVRARGDPLQPVMIWFPGGAFLVGSASTYDGSELAAREKVVVVVLQHRLGILGFLSTGDSQARGNWALLDQIAALRWVQKNIEAFGGDPGCVTLFGQSSGAMCISGLMTSSLARGLFHRAISQSGTAVFQNFITPDPLKVAKKIAQLAGCNHNSTKILVDCLRTLSGAEVMRVSQKMRFFKLHSQEDPQKVVWFMSPVVDGVVFQDNPIVLLTQGQVAPVPYLLGVNNLEFNWLLPFIMKFPMSHLRKETIAKLLWSTSTLLNVTKEQLPLVMEEYLRDVDDHDQKMLQKHVMDLAADATFVYSTLQAAHYHHNAGFPVYLYEFEHYAPGTIVKPRTDGADHGDEIGFIFGSPFSKGHSSNKEKALSLQMMKYWANFARTGNPNGGKLPYWPRYNKDEKYLQLDLTTRVGVMLREEKMAFWKRLHQN</sequence>
<organism>
    <name type="scientific">Bos taurus</name>
    <name type="common">Bovine</name>
    <dbReference type="NCBI Taxonomy" id="9913"/>
    <lineage>
        <taxon>Eukaryota</taxon>
        <taxon>Metazoa</taxon>
        <taxon>Chordata</taxon>
        <taxon>Craniata</taxon>
        <taxon>Vertebrata</taxon>
        <taxon>Euteleostomi</taxon>
        <taxon>Mammalia</taxon>
        <taxon>Eutheria</taxon>
        <taxon>Laurasiatheria</taxon>
        <taxon>Artiodactyla</taxon>
        <taxon>Ruminantia</taxon>
        <taxon>Pecora</taxon>
        <taxon>Bovidae</taxon>
        <taxon>Bovinae</taxon>
        <taxon>Bos</taxon>
    </lineage>
</organism>
<reference key="1">
    <citation type="submission" date="2006-09" db="EMBL/GenBank/DDBJ databases">
        <authorList>
            <consortium name="NIH - Mammalian Gene Collection (MGC) project"/>
        </authorList>
    </citation>
    <scope>NUCLEOTIDE SEQUENCE [LARGE SCALE MRNA]</scope>
    <source>
        <strain>Hereford</strain>
        <tissue>Fetal skin</tissue>
    </source>
</reference>
<name>EST4A_BOVIN</name>
<feature type="signal peptide" evidence="2">
    <location>
        <begin position="1"/>
        <end position="20"/>
    </location>
</feature>
<feature type="chain" id="PRO_0000325922" description="Carboxylesterase 4A">
    <location>
        <begin position="21"/>
        <end position="550"/>
    </location>
</feature>
<feature type="active site" description="Acyl-ester intermediate" evidence="3">
    <location>
        <position position="221"/>
    </location>
</feature>
<feature type="active site" description="Charge relay system" evidence="1">
    <location>
        <position position="353"/>
    </location>
</feature>
<feature type="active site" description="Charge relay system" evidence="1">
    <location>
        <position position="465"/>
    </location>
</feature>
<feature type="glycosylation site" description="N-linked (GlcNAc...) asparagine" evidence="2">
    <location>
        <position position="276"/>
    </location>
</feature>
<feature type="glycosylation site" description="N-linked (GlcNAc...) asparagine" evidence="2">
    <location>
        <position position="386"/>
    </location>
</feature>
<feature type="disulfide bond" evidence="1">
    <location>
        <begin position="88"/>
        <end position="116"/>
    </location>
</feature>
<feature type="disulfide bond" evidence="1">
    <location>
        <begin position="273"/>
        <end position="284"/>
    </location>
</feature>
<proteinExistence type="evidence at transcript level"/>
<dbReference type="EC" id="3.1.1.-"/>
<dbReference type="EMBL" id="BC149217">
    <property type="status" value="NOT_ANNOTATED_CDS"/>
    <property type="molecule type" value="mRNA"/>
</dbReference>
<dbReference type="RefSeq" id="NP_001161306.1">
    <property type="nucleotide sequence ID" value="NM_001167834.1"/>
</dbReference>
<dbReference type="SMR" id="P0C6R3"/>
<dbReference type="FunCoup" id="P0C6R3">
    <property type="interactions" value="16"/>
</dbReference>
<dbReference type="STRING" id="9913.ENSBTAP00000060152"/>
<dbReference type="ESTHER" id="bovin-est8">
    <property type="family name" value="Carb_B_Chordata"/>
</dbReference>
<dbReference type="GlyCosmos" id="P0C6R3">
    <property type="glycosylation" value="2 sites, No reported glycans"/>
</dbReference>
<dbReference type="GlyGen" id="P0C6R3">
    <property type="glycosylation" value="2 sites"/>
</dbReference>
<dbReference type="PaxDb" id="9913-ENSBTAP00000050404"/>
<dbReference type="Ensembl" id="ENSBTAT00000077292.2">
    <property type="protein sequence ID" value="ENSBTAP00000060152.2"/>
    <property type="gene ID" value="ENSBTAG00000038325.4"/>
</dbReference>
<dbReference type="GeneID" id="529706"/>
<dbReference type="KEGG" id="bta:529706"/>
<dbReference type="CTD" id="283848"/>
<dbReference type="VEuPathDB" id="HostDB:ENSBTAG00000038325"/>
<dbReference type="VGNC" id="VGNC:27231">
    <property type="gene designation" value="CES4A"/>
</dbReference>
<dbReference type="eggNOG" id="KOG1516">
    <property type="taxonomic scope" value="Eukaryota"/>
</dbReference>
<dbReference type="GeneTree" id="ENSGT00940000162924"/>
<dbReference type="HOGENOM" id="CLU_006586_13_0_1"/>
<dbReference type="InParanoid" id="P0C6R3"/>
<dbReference type="OrthoDB" id="3200163at2759"/>
<dbReference type="TreeFam" id="TF315470"/>
<dbReference type="Proteomes" id="UP000009136">
    <property type="component" value="Chromosome 18"/>
</dbReference>
<dbReference type="Bgee" id="ENSBTAG00000038325">
    <property type="expression patterns" value="Expressed in zone of skin and 42 other cell types or tissues"/>
</dbReference>
<dbReference type="GO" id="GO:0005576">
    <property type="term" value="C:extracellular region"/>
    <property type="evidence" value="ECO:0007669"/>
    <property type="project" value="UniProtKB-SubCell"/>
</dbReference>
<dbReference type="GO" id="GO:0052689">
    <property type="term" value="F:carboxylic ester hydrolase activity"/>
    <property type="evidence" value="ECO:0007669"/>
    <property type="project" value="UniProtKB-KW"/>
</dbReference>
<dbReference type="CDD" id="cd00312">
    <property type="entry name" value="Esterase_lipase"/>
    <property type="match status" value="1"/>
</dbReference>
<dbReference type="FunFam" id="3.40.50.1820:FF:000011">
    <property type="entry name" value="Carboxylic ester hydrolase"/>
    <property type="match status" value="1"/>
</dbReference>
<dbReference type="Gene3D" id="3.40.50.1820">
    <property type="entry name" value="alpha/beta hydrolase"/>
    <property type="match status" value="1"/>
</dbReference>
<dbReference type="InterPro" id="IPR029058">
    <property type="entry name" value="AB_hydrolase_fold"/>
</dbReference>
<dbReference type="InterPro" id="IPR002018">
    <property type="entry name" value="CarbesteraseB"/>
</dbReference>
<dbReference type="InterPro" id="IPR019826">
    <property type="entry name" value="Carboxylesterase_B_AS"/>
</dbReference>
<dbReference type="InterPro" id="IPR051093">
    <property type="entry name" value="Neuroligin/BSAL"/>
</dbReference>
<dbReference type="PANTHER" id="PTHR43903">
    <property type="entry name" value="NEUROLIGIN"/>
    <property type="match status" value="1"/>
</dbReference>
<dbReference type="Pfam" id="PF00135">
    <property type="entry name" value="COesterase"/>
    <property type="match status" value="1"/>
</dbReference>
<dbReference type="SUPFAM" id="SSF53474">
    <property type="entry name" value="alpha/beta-Hydrolases"/>
    <property type="match status" value="1"/>
</dbReference>
<dbReference type="PROSITE" id="PS00122">
    <property type="entry name" value="CARBOXYLESTERASE_B_1"/>
    <property type="match status" value="1"/>
</dbReference>
<protein>
    <recommendedName>
        <fullName>Carboxylesterase 4A</fullName>
        <ecNumber>3.1.1.-</ecNumber>
    </recommendedName>
</protein>
<gene>
    <name type="primary">CES4A</name>
    <name type="synonym">CES8</name>
</gene>
<keyword id="KW-1015">Disulfide bond</keyword>
<keyword id="KW-0325">Glycoprotein</keyword>
<keyword id="KW-0378">Hydrolase</keyword>
<keyword id="KW-1185">Reference proteome</keyword>
<keyword id="KW-0964">Secreted</keyword>
<keyword id="KW-0719">Serine esterase</keyword>
<keyword id="KW-0732">Signal</keyword>
<accession>P0C6R3</accession>